<keyword id="KW-0408">Iron</keyword>
<keyword id="KW-0479">Metal-binding</keyword>
<keyword id="KW-0520">NAD</keyword>
<keyword id="KW-0784">Thiamine biosynthesis</keyword>
<keyword id="KW-0808">Transferase</keyword>
<comment type="function">
    <text evidence="1">Involved in the biosynthesis of the thiazole moiety of thiamine. Catalyzes the conversion of NAD and glycine to adenosine diphosphate 5-(2-hydroxyethyl)-4-methylthiazole-2-carboxylate (ADT), an adenylated thiazole intermediate, using free sulfide as a source of sulfur.</text>
</comment>
<comment type="catalytic activity">
    <reaction evidence="1">
        <text>hydrogen sulfide + glycine + NAD(+) = ADP-5-ethyl-4-methylthiazole-2-carboxylate + nicotinamide + 3 H2O + H(+)</text>
        <dbReference type="Rhea" id="RHEA:55704"/>
        <dbReference type="ChEBI" id="CHEBI:15377"/>
        <dbReference type="ChEBI" id="CHEBI:15378"/>
        <dbReference type="ChEBI" id="CHEBI:17154"/>
        <dbReference type="ChEBI" id="CHEBI:29919"/>
        <dbReference type="ChEBI" id="CHEBI:57305"/>
        <dbReference type="ChEBI" id="CHEBI:57540"/>
        <dbReference type="ChEBI" id="CHEBI:139151"/>
        <dbReference type="EC" id="2.4.2.59"/>
    </reaction>
</comment>
<comment type="cofactor">
    <cofactor evidence="1">
        <name>Fe(2+)</name>
        <dbReference type="ChEBI" id="CHEBI:29033"/>
    </cofactor>
</comment>
<comment type="pathway">
    <text evidence="1">Cofactor biosynthesis; thiamine diphosphate biosynthesis.</text>
</comment>
<comment type="subunit">
    <text evidence="1">Homooctamer; tetramer of dimers.</text>
</comment>
<comment type="similarity">
    <text evidence="1">Belongs to the THI4 family.</text>
</comment>
<organism>
    <name type="scientific">Saccharolobus islandicus (strain L.S.2.15 / Lassen #1)</name>
    <name type="common">Sulfolobus islandicus</name>
    <dbReference type="NCBI Taxonomy" id="429572"/>
    <lineage>
        <taxon>Archaea</taxon>
        <taxon>Thermoproteota</taxon>
        <taxon>Thermoprotei</taxon>
        <taxon>Sulfolobales</taxon>
        <taxon>Sulfolobaceae</taxon>
        <taxon>Saccharolobus</taxon>
    </lineage>
</organism>
<reference key="1">
    <citation type="journal article" date="2009" name="Proc. Natl. Acad. Sci. U.S.A.">
        <title>Biogeography of the Sulfolobus islandicus pan-genome.</title>
        <authorList>
            <person name="Reno M.L."/>
            <person name="Held N.L."/>
            <person name="Fields C.J."/>
            <person name="Burke P.V."/>
            <person name="Whitaker R.J."/>
        </authorList>
    </citation>
    <scope>NUCLEOTIDE SEQUENCE [LARGE SCALE GENOMIC DNA]</scope>
    <source>
        <strain>L.S.2.15 / Lassen #1</strain>
    </source>
</reference>
<feature type="chain" id="PRO_1000205007" description="Thiamine thiazole synthase">
    <location>
        <begin position="1"/>
        <end position="267"/>
    </location>
</feature>
<feature type="binding site" description="in other chain" evidence="1">
    <location>
        <position position="41"/>
    </location>
    <ligand>
        <name>NAD(+)</name>
        <dbReference type="ChEBI" id="CHEBI:57540"/>
        <note>ligand shared between two adjacent protomers</note>
    </ligand>
</feature>
<feature type="binding site" description="in other chain" evidence="1">
    <location>
        <begin position="60"/>
        <end position="61"/>
    </location>
    <ligand>
        <name>NAD(+)</name>
        <dbReference type="ChEBI" id="CHEBI:57540"/>
        <note>ligand shared between two adjacent protomers</note>
    </ligand>
</feature>
<feature type="binding site" description="in other chain" evidence="1">
    <location>
        <position position="68"/>
    </location>
    <ligand>
        <name>NAD(+)</name>
        <dbReference type="ChEBI" id="CHEBI:57540"/>
        <note>ligand shared between two adjacent protomers</note>
    </ligand>
</feature>
<feature type="binding site" description="in other chain" evidence="1">
    <location>
        <position position="132"/>
    </location>
    <ligand>
        <name>NAD(+)</name>
        <dbReference type="ChEBI" id="CHEBI:57540"/>
        <note>ligand shared between two adjacent protomers</note>
    </ligand>
</feature>
<feature type="binding site" evidence="1">
    <location>
        <begin position="160"/>
        <end position="162"/>
    </location>
    <ligand>
        <name>NAD(+)</name>
        <dbReference type="ChEBI" id="CHEBI:57540"/>
        <note>ligand shared between two adjacent protomers</note>
    </ligand>
</feature>
<feature type="binding site" evidence="1">
    <location>
        <position position="162"/>
    </location>
    <ligand>
        <name>Fe cation</name>
        <dbReference type="ChEBI" id="CHEBI:24875"/>
        <note>ligand shared between two adjacent protomers</note>
    </ligand>
</feature>
<feature type="binding site" description="in other chain" evidence="1">
    <location>
        <position position="177"/>
    </location>
    <ligand>
        <name>Fe cation</name>
        <dbReference type="ChEBI" id="CHEBI:24875"/>
        <note>ligand shared between two adjacent protomers</note>
    </ligand>
</feature>
<feature type="binding site" description="in other chain" evidence="1">
    <location>
        <position position="227"/>
    </location>
    <ligand>
        <name>NAD(+)</name>
        <dbReference type="ChEBI" id="CHEBI:57540"/>
        <note>ligand shared between two adjacent protomers</note>
    </ligand>
</feature>
<feature type="binding site" evidence="1">
    <location>
        <position position="237"/>
    </location>
    <ligand>
        <name>glycine</name>
        <dbReference type="ChEBI" id="CHEBI:57305"/>
    </ligand>
</feature>
<gene>
    <name evidence="1" type="primary">thi4</name>
    <name type="ordered locus">LS215_1798</name>
</gene>
<accession>C3MQY1</accession>
<dbReference type="EC" id="2.4.2.59" evidence="1"/>
<dbReference type="EMBL" id="CP001399">
    <property type="protein sequence ID" value="ACP35794.1"/>
    <property type="molecule type" value="Genomic_DNA"/>
</dbReference>
<dbReference type="RefSeq" id="WP_012713900.1">
    <property type="nucleotide sequence ID" value="NC_012589.1"/>
</dbReference>
<dbReference type="SMR" id="C3MQY1"/>
<dbReference type="KEGG" id="sis:LS215_1798"/>
<dbReference type="HOGENOM" id="CLU_053727_2_0_2"/>
<dbReference type="OrthoDB" id="4240at2157"/>
<dbReference type="UniPathway" id="UPA00060"/>
<dbReference type="Proteomes" id="UP000001747">
    <property type="component" value="Chromosome"/>
</dbReference>
<dbReference type="GO" id="GO:0005506">
    <property type="term" value="F:iron ion binding"/>
    <property type="evidence" value="ECO:0007669"/>
    <property type="project" value="UniProtKB-UniRule"/>
</dbReference>
<dbReference type="GO" id="GO:0016763">
    <property type="term" value="F:pentosyltransferase activity"/>
    <property type="evidence" value="ECO:0007669"/>
    <property type="project" value="UniProtKB-UniRule"/>
</dbReference>
<dbReference type="GO" id="GO:0009228">
    <property type="term" value="P:thiamine biosynthetic process"/>
    <property type="evidence" value="ECO:0007669"/>
    <property type="project" value="UniProtKB-KW"/>
</dbReference>
<dbReference type="GO" id="GO:0009229">
    <property type="term" value="P:thiamine diphosphate biosynthetic process"/>
    <property type="evidence" value="ECO:0007669"/>
    <property type="project" value="UniProtKB-UniRule"/>
</dbReference>
<dbReference type="GO" id="GO:0052837">
    <property type="term" value="P:thiazole biosynthetic process"/>
    <property type="evidence" value="ECO:0007669"/>
    <property type="project" value="UniProtKB-UniRule"/>
</dbReference>
<dbReference type="Gene3D" id="3.50.50.60">
    <property type="entry name" value="FAD/NAD(P)-binding domain"/>
    <property type="match status" value="1"/>
</dbReference>
<dbReference type="HAMAP" id="MF_00304">
    <property type="entry name" value="Thi4"/>
    <property type="match status" value="1"/>
</dbReference>
<dbReference type="InterPro" id="IPR036188">
    <property type="entry name" value="FAD/NAD-bd_sf"/>
</dbReference>
<dbReference type="InterPro" id="IPR002922">
    <property type="entry name" value="Thi4_fam"/>
</dbReference>
<dbReference type="InterPro" id="IPR022828">
    <property type="entry name" value="Thi4_prok"/>
</dbReference>
<dbReference type="NCBIfam" id="TIGR00292">
    <property type="entry name" value="sulfide-dependent adenosine diphosphate thiazole synthase"/>
    <property type="match status" value="1"/>
</dbReference>
<dbReference type="PANTHER" id="PTHR43422">
    <property type="entry name" value="THIAMINE THIAZOLE SYNTHASE"/>
    <property type="match status" value="1"/>
</dbReference>
<dbReference type="PANTHER" id="PTHR43422:SF3">
    <property type="entry name" value="THIAMINE THIAZOLE SYNTHASE"/>
    <property type="match status" value="1"/>
</dbReference>
<dbReference type="Pfam" id="PF01946">
    <property type="entry name" value="Thi4"/>
    <property type="match status" value="1"/>
</dbReference>
<dbReference type="PRINTS" id="PR00368">
    <property type="entry name" value="FADPNR"/>
</dbReference>
<dbReference type="PRINTS" id="PR00411">
    <property type="entry name" value="PNDRDTASEI"/>
</dbReference>
<dbReference type="SUPFAM" id="SSF51905">
    <property type="entry name" value="FAD/NAD(P)-binding domain"/>
    <property type="match status" value="1"/>
</dbReference>
<evidence type="ECO:0000255" key="1">
    <source>
        <dbReference type="HAMAP-Rule" id="MF_00304"/>
    </source>
</evidence>
<sequence>MEVKIKQVDEVKISRYIIKETMEDWYQFVESDVVIVGAGPSGLSAAYYLAKAGLKTLVFERRLSFGGGIGGGAMLFHKLIIEKPADEILREVNVRLKEVEEGVYVVDSAEFMAKLATAAIDAGAKIIHGVTVDDVIFRENPLRVAGVAVEWTATQMASLHVDPIFISAKAVVDATGHDAEVISVAARKIPELGIVIPGEKSAYSERAEELTVINTGKVAEGLYAAGMAVTEVKGLPRMGPIFGAMVLSGKAVAEEITKDLLKSEIRT</sequence>
<proteinExistence type="inferred from homology"/>
<protein>
    <recommendedName>
        <fullName evidence="1">Thiamine thiazole synthase</fullName>
        <ecNumber evidence="1">2.4.2.59</ecNumber>
    </recommendedName>
</protein>
<name>THI4_SACI2</name>